<name>PNP_METI4</name>
<keyword id="KW-0963">Cytoplasm</keyword>
<keyword id="KW-0460">Magnesium</keyword>
<keyword id="KW-0479">Metal-binding</keyword>
<keyword id="KW-0548">Nucleotidyltransferase</keyword>
<keyword id="KW-0694">RNA-binding</keyword>
<keyword id="KW-0808">Transferase</keyword>
<comment type="function">
    <text evidence="1">Involved in mRNA degradation. Catalyzes the phosphorolysis of single-stranded polyribonucleotides processively in the 3'- to 5'-direction.</text>
</comment>
<comment type="catalytic activity">
    <reaction evidence="1">
        <text>RNA(n+1) + phosphate = RNA(n) + a ribonucleoside 5'-diphosphate</text>
        <dbReference type="Rhea" id="RHEA:22096"/>
        <dbReference type="Rhea" id="RHEA-COMP:14527"/>
        <dbReference type="Rhea" id="RHEA-COMP:17342"/>
        <dbReference type="ChEBI" id="CHEBI:43474"/>
        <dbReference type="ChEBI" id="CHEBI:57930"/>
        <dbReference type="ChEBI" id="CHEBI:140395"/>
        <dbReference type="EC" id="2.7.7.8"/>
    </reaction>
</comment>
<comment type="cofactor">
    <cofactor evidence="1">
        <name>Mg(2+)</name>
        <dbReference type="ChEBI" id="CHEBI:18420"/>
    </cofactor>
</comment>
<comment type="subcellular location">
    <subcellularLocation>
        <location evidence="1">Cytoplasm</location>
    </subcellularLocation>
</comment>
<comment type="similarity">
    <text evidence="1">Belongs to the polyribonucleotide nucleotidyltransferase family.</text>
</comment>
<comment type="sequence caution" evidence="2">
    <conflict type="erroneous initiation">
        <sequence resource="EMBL-CDS" id="ACD84178"/>
    </conflict>
</comment>
<feature type="chain" id="PRO_0000381906" description="Polyribonucleotide nucleotidyltransferase">
    <location>
        <begin position="1"/>
        <end position="707"/>
    </location>
</feature>
<feature type="domain" description="KH" evidence="1">
    <location>
        <begin position="558"/>
        <end position="617"/>
    </location>
</feature>
<feature type="domain" description="S1 motif" evidence="1">
    <location>
        <begin position="622"/>
        <end position="695"/>
    </location>
</feature>
<feature type="binding site" evidence="1">
    <location>
        <position position="491"/>
    </location>
    <ligand>
        <name>Mg(2+)</name>
        <dbReference type="ChEBI" id="CHEBI:18420"/>
    </ligand>
</feature>
<feature type="binding site" evidence="1">
    <location>
        <position position="497"/>
    </location>
    <ligand>
        <name>Mg(2+)</name>
        <dbReference type="ChEBI" id="CHEBI:18420"/>
    </ligand>
</feature>
<gene>
    <name evidence="1" type="primary">pnp</name>
    <name type="ordered locus">Minf_2124</name>
</gene>
<dbReference type="EC" id="2.7.7.8" evidence="1"/>
<dbReference type="EMBL" id="CP000975">
    <property type="protein sequence ID" value="ACD84178.1"/>
    <property type="status" value="ALT_INIT"/>
    <property type="molecule type" value="Genomic_DNA"/>
</dbReference>
<dbReference type="RefSeq" id="WP_048810335.1">
    <property type="nucleotide sequence ID" value="NC_010794.1"/>
</dbReference>
<dbReference type="SMR" id="B3DZ86"/>
<dbReference type="STRING" id="481448.Minf_2124"/>
<dbReference type="KEGG" id="min:Minf_2124"/>
<dbReference type="eggNOG" id="COG1185">
    <property type="taxonomic scope" value="Bacteria"/>
</dbReference>
<dbReference type="HOGENOM" id="CLU_004217_2_2_0"/>
<dbReference type="OrthoDB" id="9804305at2"/>
<dbReference type="Proteomes" id="UP000009149">
    <property type="component" value="Chromosome"/>
</dbReference>
<dbReference type="GO" id="GO:0005829">
    <property type="term" value="C:cytosol"/>
    <property type="evidence" value="ECO:0007669"/>
    <property type="project" value="TreeGrafter"/>
</dbReference>
<dbReference type="GO" id="GO:0000175">
    <property type="term" value="F:3'-5'-RNA exonuclease activity"/>
    <property type="evidence" value="ECO:0007669"/>
    <property type="project" value="TreeGrafter"/>
</dbReference>
<dbReference type="GO" id="GO:0000287">
    <property type="term" value="F:magnesium ion binding"/>
    <property type="evidence" value="ECO:0007669"/>
    <property type="project" value="UniProtKB-UniRule"/>
</dbReference>
<dbReference type="GO" id="GO:0004654">
    <property type="term" value="F:polyribonucleotide nucleotidyltransferase activity"/>
    <property type="evidence" value="ECO:0007669"/>
    <property type="project" value="UniProtKB-UniRule"/>
</dbReference>
<dbReference type="GO" id="GO:0003723">
    <property type="term" value="F:RNA binding"/>
    <property type="evidence" value="ECO:0007669"/>
    <property type="project" value="UniProtKB-UniRule"/>
</dbReference>
<dbReference type="GO" id="GO:0006402">
    <property type="term" value="P:mRNA catabolic process"/>
    <property type="evidence" value="ECO:0007669"/>
    <property type="project" value="UniProtKB-UniRule"/>
</dbReference>
<dbReference type="GO" id="GO:0006396">
    <property type="term" value="P:RNA processing"/>
    <property type="evidence" value="ECO:0007669"/>
    <property type="project" value="InterPro"/>
</dbReference>
<dbReference type="CDD" id="cd02393">
    <property type="entry name" value="KH-I_PNPase"/>
    <property type="match status" value="1"/>
</dbReference>
<dbReference type="CDD" id="cd11363">
    <property type="entry name" value="RNase_PH_PNPase_1"/>
    <property type="match status" value="1"/>
</dbReference>
<dbReference type="CDD" id="cd11364">
    <property type="entry name" value="RNase_PH_PNPase_2"/>
    <property type="match status" value="1"/>
</dbReference>
<dbReference type="FunFam" id="3.30.1370.10:FF:000001">
    <property type="entry name" value="Polyribonucleotide nucleotidyltransferase"/>
    <property type="match status" value="1"/>
</dbReference>
<dbReference type="FunFam" id="3.30.230.70:FF:000001">
    <property type="entry name" value="Polyribonucleotide nucleotidyltransferase"/>
    <property type="match status" value="1"/>
</dbReference>
<dbReference type="FunFam" id="3.30.230.70:FF:000002">
    <property type="entry name" value="Polyribonucleotide nucleotidyltransferase"/>
    <property type="match status" value="1"/>
</dbReference>
<dbReference type="FunFam" id="2.40.50.140:FF:000189">
    <property type="entry name" value="Polyribonucleotide nucleotidyltransferase, putative"/>
    <property type="match status" value="1"/>
</dbReference>
<dbReference type="Gene3D" id="3.30.230.70">
    <property type="entry name" value="GHMP Kinase, N-terminal domain"/>
    <property type="match status" value="2"/>
</dbReference>
<dbReference type="Gene3D" id="3.30.1370.10">
    <property type="entry name" value="K Homology domain, type 1"/>
    <property type="match status" value="1"/>
</dbReference>
<dbReference type="Gene3D" id="2.40.50.140">
    <property type="entry name" value="Nucleic acid-binding proteins"/>
    <property type="match status" value="1"/>
</dbReference>
<dbReference type="HAMAP" id="MF_01595">
    <property type="entry name" value="PNPase"/>
    <property type="match status" value="1"/>
</dbReference>
<dbReference type="InterPro" id="IPR001247">
    <property type="entry name" value="ExoRNase_PH_dom1"/>
</dbReference>
<dbReference type="InterPro" id="IPR015847">
    <property type="entry name" value="ExoRNase_PH_dom2"/>
</dbReference>
<dbReference type="InterPro" id="IPR036345">
    <property type="entry name" value="ExoRNase_PH_dom2_sf"/>
</dbReference>
<dbReference type="InterPro" id="IPR004087">
    <property type="entry name" value="KH_dom"/>
</dbReference>
<dbReference type="InterPro" id="IPR004088">
    <property type="entry name" value="KH_dom_type_1"/>
</dbReference>
<dbReference type="InterPro" id="IPR036612">
    <property type="entry name" value="KH_dom_type_1_sf"/>
</dbReference>
<dbReference type="InterPro" id="IPR012340">
    <property type="entry name" value="NA-bd_OB-fold"/>
</dbReference>
<dbReference type="InterPro" id="IPR012162">
    <property type="entry name" value="PNPase"/>
</dbReference>
<dbReference type="InterPro" id="IPR027408">
    <property type="entry name" value="PNPase/RNase_PH_dom_sf"/>
</dbReference>
<dbReference type="InterPro" id="IPR015848">
    <property type="entry name" value="PNPase_PH_RNA-bd_bac/org-type"/>
</dbReference>
<dbReference type="InterPro" id="IPR036456">
    <property type="entry name" value="PNPase_PH_RNA-bd_sf"/>
</dbReference>
<dbReference type="InterPro" id="IPR020568">
    <property type="entry name" value="Ribosomal_Su5_D2-typ_SF"/>
</dbReference>
<dbReference type="InterPro" id="IPR003029">
    <property type="entry name" value="S1_domain"/>
</dbReference>
<dbReference type="NCBIfam" id="TIGR03591">
    <property type="entry name" value="polynuc_phos"/>
    <property type="match status" value="1"/>
</dbReference>
<dbReference type="NCBIfam" id="NF008805">
    <property type="entry name" value="PRK11824.1"/>
    <property type="match status" value="1"/>
</dbReference>
<dbReference type="PANTHER" id="PTHR11252">
    <property type="entry name" value="POLYRIBONUCLEOTIDE NUCLEOTIDYLTRANSFERASE"/>
    <property type="match status" value="1"/>
</dbReference>
<dbReference type="PANTHER" id="PTHR11252:SF0">
    <property type="entry name" value="POLYRIBONUCLEOTIDE NUCLEOTIDYLTRANSFERASE 1, MITOCHONDRIAL"/>
    <property type="match status" value="1"/>
</dbReference>
<dbReference type="Pfam" id="PF00013">
    <property type="entry name" value="KH_1"/>
    <property type="match status" value="1"/>
</dbReference>
<dbReference type="Pfam" id="PF03726">
    <property type="entry name" value="PNPase"/>
    <property type="match status" value="1"/>
</dbReference>
<dbReference type="Pfam" id="PF01138">
    <property type="entry name" value="RNase_PH"/>
    <property type="match status" value="2"/>
</dbReference>
<dbReference type="Pfam" id="PF03725">
    <property type="entry name" value="RNase_PH_C"/>
    <property type="match status" value="1"/>
</dbReference>
<dbReference type="Pfam" id="PF00575">
    <property type="entry name" value="S1"/>
    <property type="match status" value="1"/>
</dbReference>
<dbReference type="PIRSF" id="PIRSF005499">
    <property type="entry name" value="PNPase"/>
    <property type="match status" value="1"/>
</dbReference>
<dbReference type="SMART" id="SM00322">
    <property type="entry name" value="KH"/>
    <property type="match status" value="1"/>
</dbReference>
<dbReference type="SMART" id="SM00316">
    <property type="entry name" value="S1"/>
    <property type="match status" value="1"/>
</dbReference>
<dbReference type="SUPFAM" id="SSF54791">
    <property type="entry name" value="Eukaryotic type KH-domain (KH-domain type I)"/>
    <property type="match status" value="1"/>
</dbReference>
<dbReference type="SUPFAM" id="SSF50249">
    <property type="entry name" value="Nucleic acid-binding proteins"/>
    <property type="match status" value="1"/>
</dbReference>
<dbReference type="SUPFAM" id="SSF46915">
    <property type="entry name" value="Polynucleotide phosphorylase/guanosine pentaphosphate synthase (PNPase/GPSI), domain 3"/>
    <property type="match status" value="1"/>
</dbReference>
<dbReference type="SUPFAM" id="SSF55666">
    <property type="entry name" value="Ribonuclease PH domain 2-like"/>
    <property type="match status" value="2"/>
</dbReference>
<dbReference type="SUPFAM" id="SSF54211">
    <property type="entry name" value="Ribosomal protein S5 domain 2-like"/>
    <property type="match status" value="2"/>
</dbReference>
<dbReference type="PROSITE" id="PS50084">
    <property type="entry name" value="KH_TYPE_1"/>
    <property type="match status" value="1"/>
</dbReference>
<dbReference type="PROSITE" id="PS50126">
    <property type="entry name" value="S1"/>
    <property type="match status" value="1"/>
</dbReference>
<accession>B3DZ86</accession>
<organism>
    <name type="scientific">Methylacidiphilum infernorum (isolate V4)</name>
    <name type="common">Methylokorus infernorum (strain V4)</name>
    <dbReference type="NCBI Taxonomy" id="481448"/>
    <lineage>
        <taxon>Bacteria</taxon>
        <taxon>Pseudomonadati</taxon>
        <taxon>Verrucomicrobiota</taxon>
        <taxon>Methylacidiphilae</taxon>
        <taxon>Methylacidiphilales</taxon>
        <taxon>Methylacidiphilaceae</taxon>
        <taxon>Methylacidiphilum (ex Ratnadevi et al. 2023)</taxon>
    </lineage>
</organism>
<proteinExistence type="inferred from homology"/>
<protein>
    <recommendedName>
        <fullName evidence="1">Polyribonucleotide nucleotidyltransferase</fullName>
        <ecNumber evidence="1">2.7.7.8</ecNumber>
    </recommendedName>
    <alternativeName>
        <fullName evidence="1">Polynucleotide phosphorylase</fullName>
        <shortName evidence="1">PNPase</shortName>
    </alternativeName>
</protein>
<sequence>MPEYIKRKFGDQTIVFETGKLAKFADGSVTVSYGETAVLVTAVSVTELKEDQDFLPLQVEYREKAAAAGRFPGGYFRKEGRPTDKEILTSRMIDRPLRPLFPKGYFYETQILGTLLSADGQNDPDVMAINGASAALMVSDIPFYGPVGAVRIGQIDGRWIINPTHREREISDIDLVYVGSEHYPLMIEGSAREFPEEEFVKALEFAHQHVQEVIAAQKELAEKVGKPKRSCVLFEENLAITNRLAELYSSQLQDALYTSSKTERQKKLAKLKEELTAKILEEFPTATPREITSSYDSLQKTIFRTNVLETKRRCDGRGPEDIRPIAIETSVVPRSHGSSLFCRGETQALCMATLASLNEAQELDAYGGGEQSKRFLLHYFFPPFSVGEVGRITGQSRREIGHGALAERSLLPVIPSETDFPYAIRVSSEILESNGSTSMATVCGGSLALMDAGVPLKTSVAGISVGLVKGKEEDFDWSRYCLLTDILGLEDHYGDMDFKIAGTRKGITGFQLDLKLRGIPLDVMAKAIFQSQKARMVILDCMDKVINAPRAEISKHAPRIEKIKIHPDKIGLLIGPGGKTIKKISAESGAEITIEDDGTVMIYSSSADSLEAAREMIEDMVGEVTVGGIYRSKVVSVKDFGCFIEIKGKGEGLVHISELSDTPVRRVDQVVRVGEEIWVKCIGVDEKGRYKFSRKAAMKELHAKRMQ</sequence>
<reference key="1">
    <citation type="journal article" date="2008" name="Biol. Direct">
        <title>Complete genome sequence of the extremely acidophilic methanotroph isolate V4, Methylacidiphilum infernorum, a representative of the bacterial phylum Verrucomicrobia.</title>
        <authorList>
            <person name="Hou S."/>
            <person name="Makarova K.S."/>
            <person name="Saw J.H."/>
            <person name="Senin P."/>
            <person name="Ly B.V."/>
            <person name="Zhou Z."/>
            <person name="Ren Y."/>
            <person name="Wang J."/>
            <person name="Galperin M.Y."/>
            <person name="Omelchenko M.V."/>
            <person name="Wolf Y.I."/>
            <person name="Yutin N."/>
            <person name="Koonin E.V."/>
            <person name="Stott M.B."/>
            <person name="Mountain B.W."/>
            <person name="Crowe M.A."/>
            <person name="Smirnova A.V."/>
            <person name="Dunfield P.F."/>
            <person name="Feng L."/>
            <person name="Wang L."/>
            <person name="Alam M."/>
        </authorList>
    </citation>
    <scope>NUCLEOTIDE SEQUENCE [LARGE SCALE GENOMIC DNA]</scope>
    <source>
        <strain>Isolate V4</strain>
    </source>
</reference>
<evidence type="ECO:0000255" key="1">
    <source>
        <dbReference type="HAMAP-Rule" id="MF_01595"/>
    </source>
</evidence>
<evidence type="ECO:0000305" key="2"/>